<name>GLGA_BURTA</name>
<dbReference type="EC" id="2.4.1.21" evidence="1"/>
<dbReference type="EMBL" id="CP000085">
    <property type="protein sequence ID" value="ABC33934.1"/>
    <property type="status" value="ALT_INIT"/>
    <property type="molecule type" value="Genomic_DNA"/>
</dbReference>
<dbReference type="RefSeq" id="WP_009896325.1">
    <property type="nucleotide sequence ID" value="NC_007650.1"/>
</dbReference>
<dbReference type="SMR" id="Q2T6R2"/>
<dbReference type="CAZy" id="GT5">
    <property type="family name" value="Glycosyltransferase Family 5"/>
</dbReference>
<dbReference type="GeneID" id="45118414"/>
<dbReference type="KEGG" id="bte:BTH_II0940"/>
<dbReference type="HOGENOM" id="CLU_009583_18_4_4"/>
<dbReference type="UniPathway" id="UPA00164"/>
<dbReference type="Proteomes" id="UP000001930">
    <property type="component" value="Chromosome II"/>
</dbReference>
<dbReference type="GO" id="GO:0005829">
    <property type="term" value="C:cytosol"/>
    <property type="evidence" value="ECO:0007669"/>
    <property type="project" value="TreeGrafter"/>
</dbReference>
<dbReference type="GO" id="GO:0009011">
    <property type="term" value="F:alpha-1,4-glucan glucosyltransferase (ADP-glucose donor) activity"/>
    <property type="evidence" value="ECO:0007669"/>
    <property type="project" value="UniProtKB-UniRule"/>
</dbReference>
<dbReference type="GO" id="GO:0004373">
    <property type="term" value="F:alpha-1,4-glucan glucosyltransferase (UDP-glucose donor) activity"/>
    <property type="evidence" value="ECO:0007669"/>
    <property type="project" value="InterPro"/>
</dbReference>
<dbReference type="GO" id="GO:0005978">
    <property type="term" value="P:glycogen biosynthetic process"/>
    <property type="evidence" value="ECO:0007669"/>
    <property type="project" value="UniProtKB-UniRule"/>
</dbReference>
<dbReference type="CDD" id="cd03791">
    <property type="entry name" value="GT5_Glycogen_synthase_DULL1-like"/>
    <property type="match status" value="1"/>
</dbReference>
<dbReference type="Gene3D" id="3.40.50.2000">
    <property type="entry name" value="Glycogen Phosphorylase B"/>
    <property type="match status" value="2"/>
</dbReference>
<dbReference type="HAMAP" id="MF_00484">
    <property type="entry name" value="Glycogen_synth"/>
    <property type="match status" value="1"/>
</dbReference>
<dbReference type="InterPro" id="IPR001296">
    <property type="entry name" value="Glyco_trans_1"/>
</dbReference>
<dbReference type="InterPro" id="IPR011835">
    <property type="entry name" value="GS/SS"/>
</dbReference>
<dbReference type="InterPro" id="IPR013534">
    <property type="entry name" value="Starch_synth_cat_dom"/>
</dbReference>
<dbReference type="NCBIfam" id="TIGR02095">
    <property type="entry name" value="glgA"/>
    <property type="match status" value="1"/>
</dbReference>
<dbReference type="NCBIfam" id="NF001899">
    <property type="entry name" value="PRK00654.1-2"/>
    <property type="match status" value="1"/>
</dbReference>
<dbReference type="PANTHER" id="PTHR45825:SF11">
    <property type="entry name" value="ALPHA AMYLASE DOMAIN-CONTAINING PROTEIN"/>
    <property type="match status" value="1"/>
</dbReference>
<dbReference type="PANTHER" id="PTHR45825">
    <property type="entry name" value="GRANULE-BOUND STARCH SYNTHASE 1, CHLOROPLASTIC/AMYLOPLASTIC"/>
    <property type="match status" value="1"/>
</dbReference>
<dbReference type="Pfam" id="PF08323">
    <property type="entry name" value="Glyco_transf_5"/>
    <property type="match status" value="1"/>
</dbReference>
<dbReference type="Pfam" id="PF00534">
    <property type="entry name" value="Glycos_transf_1"/>
    <property type="match status" value="1"/>
</dbReference>
<dbReference type="SUPFAM" id="SSF53756">
    <property type="entry name" value="UDP-Glycosyltransferase/glycogen phosphorylase"/>
    <property type="match status" value="1"/>
</dbReference>
<protein>
    <recommendedName>
        <fullName evidence="1">Glycogen synthase</fullName>
        <ecNumber evidence="1">2.4.1.21</ecNumber>
    </recommendedName>
    <alternativeName>
        <fullName evidence="1">Starch [bacterial glycogen] synthase</fullName>
    </alternativeName>
</protein>
<reference key="1">
    <citation type="journal article" date="2005" name="BMC Genomics">
        <title>Bacterial genome adaptation to niches: divergence of the potential virulence genes in three Burkholderia species of different survival strategies.</title>
        <authorList>
            <person name="Kim H.S."/>
            <person name="Schell M.A."/>
            <person name="Yu Y."/>
            <person name="Ulrich R.L."/>
            <person name="Sarria S.H."/>
            <person name="Nierman W.C."/>
            <person name="DeShazer D."/>
        </authorList>
    </citation>
    <scope>NUCLEOTIDE SEQUENCE [LARGE SCALE GENOMIC DNA]</scope>
    <source>
        <strain>ATCC 700388 / DSM 13276 / CCUG 48851 / CIP 106301 / E264</strain>
    </source>
</reference>
<evidence type="ECO:0000255" key="1">
    <source>
        <dbReference type="HAMAP-Rule" id="MF_00484"/>
    </source>
</evidence>
<evidence type="ECO:0000256" key="2">
    <source>
        <dbReference type="SAM" id="MobiDB-lite"/>
    </source>
</evidence>
<evidence type="ECO:0000305" key="3"/>
<feature type="chain" id="PRO_0000241790" description="Glycogen synthase">
    <location>
        <begin position="1"/>
        <end position="533"/>
    </location>
</feature>
<feature type="region of interest" description="Disordered" evidence="2">
    <location>
        <begin position="497"/>
        <end position="533"/>
    </location>
</feature>
<feature type="compositionally biased region" description="Basic and acidic residues" evidence="2">
    <location>
        <begin position="512"/>
        <end position="525"/>
    </location>
</feature>
<feature type="binding site" evidence="1">
    <location>
        <position position="12"/>
    </location>
    <ligand>
        <name>ADP-alpha-D-glucose</name>
        <dbReference type="ChEBI" id="CHEBI:57498"/>
    </ligand>
</feature>
<keyword id="KW-0320">Glycogen biosynthesis</keyword>
<keyword id="KW-0328">Glycosyltransferase</keyword>
<keyword id="KW-0808">Transferase</keyword>
<sequence length="533" mass="57466">MFVASEAFPLAKTGGLADVCASLPKALRALGCDVRVLMPGYAQALDRVLRPRVVAELGEVLPGAAVRIIAGSMPDSGVPVWLLDCPSLYRRAGSLYCGPDDADWADNAYRFGLLCQVAARVALGAAGLRWRPDVVHAHDWHGGLVALLTRGAGDARPKTVFTIHNAAFQGNFALDDAARIGLPADALSVDGVEFYGQLSFLKAGARYADRLTTVSPTYAGEIQTAEFGCGLEGLYAARRDQLSGIMNGIDTELWNPATDRWLPQPYSIDDMGGKAGCKAALQQELGLCADARAPLVASVCRLTSQKMSDIVLERLPEQLAQHPRMQFALHGRGDRALEQGFDALAAQYPRRVAVRIGYDETLAHRIHAGADILLHGARFEPCGLTQLYAMRYGTIPIVRRVGGLADSVVDLDTLAPHSEDATGFVFDAPTGDAMSEALRRCVNLHDARPGVWSALCRLAMARDSSWSRSARAYLDLYAALTPRRRVEASDEARGAAAALARADAASGRRRRAPEQSERLRQERLARQVALASK</sequence>
<comment type="function">
    <text evidence="1">Synthesizes alpha-1,4-glucan chains using ADP-glucose.</text>
</comment>
<comment type="catalytic activity">
    <reaction evidence="1">
        <text>[(1-&gt;4)-alpha-D-glucosyl](n) + ADP-alpha-D-glucose = [(1-&gt;4)-alpha-D-glucosyl](n+1) + ADP + H(+)</text>
        <dbReference type="Rhea" id="RHEA:18189"/>
        <dbReference type="Rhea" id="RHEA-COMP:9584"/>
        <dbReference type="Rhea" id="RHEA-COMP:9587"/>
        <dbReference type="ChEBI" id="CHEBI:15378"/>
        <dbReference type="ChEBI" id="CHEBI:15444"/>
        <dbReference type="ChEBI" id="CHEBI:57498"/>
        <dbReference type="ChEBI" id="CHEBI:456216"/>
        <dbReference type="EC" id="2.4.1.21"/>
    </reaction>
</comment>
<comment type="pathway">
    <text evidence="1">Glycan biosynthesis; glycogen biosynthesis.</text>
</comment>
<comment type="similarity">
    <text evidence="1">Belongs to the glycosyltransferase 1 family. Bacterial/plant glycogen synthase subfamily.</text>
</comment>
<comment type="sequence caution" evidence="3">
    <conflict type="erroneous initiation">
        <sequence resource="EMBL-CDS" id="ABC33934"/>
    </conflict>
</comment>
<gene>
    <name evidence="1" type="primary">glgA</name>
    <name type="ordered locus">BTH_II0940</name>
</gene>
<proteinExistence type="inferred from homology"/>
<accession>Q2T6R2</accession>
<organism>
    <name type="scientific">Burkholderia thailandensis (strain ATCC 700388 / DSM 13276 / CCUG 48851 / CIP 106301 / E264)</name>
    <dbReference type="NCBI Taxonomy" id="271848"/>
    <lineage>
        <taxon>Bacteria</taxon>
        <taxon>Pseudomonadati</taxon>
        <taxon>Pseudomonadota</taxon>
        <taxon>Betaproteobacteria</taxon>
        <taxon>Burkholderiales</taxon>
        <taxon>Burkholderiaceae</taxon>
        <taxon>Burkholderia</taxon>
        <taxon>pseudomallei group</taxon>
    </lineage>
</organism>